<dbReference type="EMBL" id="M11674">
    <property type="protein sequence ID" value="AAA48779.1"/>
    <property type="molecule type" value="mRNA"/>
</dbReference>
<dbReference type="EMBL" id="D00311">
    <property type="protein sequence ID" value="BAA00214.1"/>
    <property type="molecule type" value="Genomic_DNA"/>
</dbReference>
<dbReference type="PIR" id="JX0042">
    <property type="entry name" value="LNCH14"/>
</dbReference>
<dbReference type="RefSeq" id="NP_990826.1">
    <property type="nucleotide sequence ID" value="NM_205495.1"/>
</dbReference>
<dbReference type="PDB" id="3DUI">
    <property type="method" value="X-ray"/>
    <property type="resolution" value="2.10 A"/>
    <property type="chains" value="A/B=1-135"/>
</dbReference>
<dbReference type="PDBsum" id="3DUI"/>
<dbReference type="SMR" id="P07583"/>
<dbReference type="FunCoup" id="P07583">
    <property type="interactions" value="7"/>
</dbReference>
<dbReference type="STRING" id="9031.ENSGALP00000020275"/>
<dbReference type="BindingDB" id="P07583"/>
<dbReference type="ChEMBL" id="CHEMBL2189155"/>
<dbReference type="UniLectin" id="P07583"/>
<dbReference type="iPTMnet" id="P07583"/>
<dbReference type="PaxDb" id="9031-ENSGALP00000020275"/>
<dbReference type="Ensembl" id="ENSGALT00010026192.1">
    <property type="protein sequence ID" value="ENSGALP00010014816.1"/>
    <property type="gene ID" value="ENSGALG00010010935.1"/>
</dbReference>
<dbReference type="GeneID" id="396491"/>
<dbReference type="KEGG" id="gga:396491"/>
<dbReference type="CTD" id="396491"/>
<dbReference type="VEuPathDB" id="HostDB:geneid_396491"/>
<dbReference type="eggNOG" id="KOG3587">
    <property type="taxonomic scope" value="Eukaryota"/>
</dbReference>
<dbReference type="GeneTree" id="ENSGT00940000155534"/>
<dbReference type="HOGENOM" id="CLU_037794_5_0_1"/>
<dbReference type="InParanoid" id="P07583"/>
<dbReference type="OMA" id="IKCMAFE"/>
<dbReference type="OrthoDB" id="8443340at2759"/>
<dbReference type="PhylomeDB" id="P07583"/>
<dbReference type="TreeFam" id="TF315551"/>
<dbReference type="Reactome" id="R-GGA-381426">
    <property type="pathway name" value="Regulation of Insulin-like Growth Factor (IGF) transport and uptake by Insulin-like Growth Factor Binding Proteins (IGFBPs)"/>
</dbReference>
<dbReference type="Reactome" id="R-GGA-8957275">
    <property type="pathway name" value="Post-translational protein phosphorylation"/>
</dbReference>
<dbReference type="EvolutionaryTrace" id="P07583"/>
<dbReference type="PRO" id="PR:P07583"/>
<dbReference type="Proteomes" id="UP000000539">
    <property type="component" value="Chromosome 1"/>
</dbReference>
<dbReference type="Bgee" id="ENSGALG00000012420">
    <property type="expression patterns" value="Expressed in lung and 13 other cell types or tissues"/>
</dbReference>
<dbReference type="GO" id="GO:0005615">
    <property type="term" value="C:extracellular space"/>
    <property type="evidence" value="ECO:0000318"/>
    <property type="project" value="GO_Central"/>
</dbReference>
<dbReference type="GO" id="GO:0030395">
    <property type="term" value="F:lactose binding"/>
    <property type="evidence" value="ECO:0000318"/>
    <property type="project" value="GO_Central"/>
</dbReference>
<dbReference type="GO" id="GO:0043236">
    <property type="term" value="F:laminin binding"/>
    <property type="evidence" value="ECO:0000318"/>
    <property type="project" value="GO_Central"/>
</dbReference>
<dbReference type="CDD" id="cd00070">
    <property type="entry name" value="GLECT"/>
    <property type="match status" value="1"/>
</dbReference>
<dbReference type="FunFam" id="2.60.120.200:FF:000021">
    <property type="entry name" value="Galectin"/>
    <property type="match status" value="1"/>
</dbReference>
<dbReference type="Gene3D" id="2.60.120.200">
    <property type="match status" value="1"/>
</dbReference>
<dbReference type="InterPro" id="IPR013320">
    <property type="entry name" value="ConA-like_dom_sf"/>
</dbReference>
<dbReference type="InterPro" id="IPR044156">
    <property type="entry name" value="Galectin-like"/>
</dbReference>
<dbReference type="InterPro" id="IPR001079">
    <property type="entry name" value="Galectin_CRD"/>
</dbReference>
<dbReference type="PANTHER" id="PTHR11346">
    <property type="entry name" value="GALECTIN"/>
    <property type="match status" value="1"/>
</dbReference>
<dbReference type="PANTHER" id="PTHR11346:SF97">
    <property type="entry name" value="GALECTIN-1"/>
    <property type="match status" value="1"/>
</dbReference>
<dbReference type="Pfam" id="PF00337">
    <property type="entry name" value="Gal-bind_lectin"/>
    <property type="match status" value="1"/>
</dbReference>
<dbReference type="SMART" id="SM00908">
    <property type="entry name" value="Gal-bind_lectin"/>
    <property type="match status" value="1"/>
</dbReference>
<dbReference type="SMART" id="SM00276">
    <property type="entry name" value="GLECT"/>
    <property type="match status" value="1"/>
</dbReference>
<dbReference type="SUPFAM" id="SSF49899">
    <property type="entry name" value="Concanavalin A-like lectins/glucanases"/>
    <property type="match status" value="1"/>
</dbReference>
<dbReference type="PROSITE" id="PS51304">
    <property type="entry name" value="GALECTIN"/>
    <property type="match status" value="1"/>
</dbReference>
<evidence type="ECO:0000250" key="1"/>
<evidence type="ECO:0000255" key="2"/>
<evidence type="ECO:0000255" key="3">
    <source>
        <dbReference type="PROSITE-ProRule" id="PRU00639"/>
    </source>
</evidence>
<evidence type="ECO:0000269" key="4">
    <source>
    </source>
</evidence>
<evidence type="ECO:0000269" key="5">
    <source>
    </source>
</evidence>
<evidence type="ECO:0000269" key="6">
    <source>
    </source>
</evidence>
<evidence type="ECO:0007829" key="7">
    <source>
        <dbReference type="PDB" id="3DUI"/>
    </source>
</evidence>
<accession>P07583</accession>
<comment type="function">
    <text evidence="5">This protein binds beta-galactoside. May participate in host antiviral defense through specific interaction with glycans on the viral envelope glycoproteins.</text>
</comment>
<comment type="subunit">
    <text evidence="4">Homodimer; disulfide-linked.</text>
</comment>
<comment type="subunit">
    <text evidence="5">(Microbial infection) Interacts with newcastle disease virus protein HN; this interaction inhibits viral adsorption rather than internalization.</text>
</comment>
<comment type="tissue specificity">
    <text>Mainly in the intestine (adult), mainly in the skin (embryo).</text>
</comment>
<name>LEG4_CHICK</name>
<keyword id="KW-0002">3D-structure</keyword>
<keyword id="KW-0007">Acetylation</keyword>
<keyword id="KW-0903">Direct protein sequencing</keyword>
<keyword id="KW-1015">Disulfide bond</keyword>
<keyword id="KW-0430">Lectin</keyword>
<keyword id="KW-1185">Reference proteome</keyword>
<reference key="1">
    <citation type="journal article" date="1986" name="Biochem. Biophys. Res. Commun.">
        <title>Nucleotide sequence of chick 14K beta-galactoside-binding lectin mRNA.</title>
        <authorList>
            <person name="Ohyama Y."/>
            <person name="Hirabayashi J."/>
            <person name="Oda Y."/>
            <person name="Ohno S."/>
            <person name="Kawasaki H."/>
            <person name="Suzuki K."/>
            <person name="Kasai K."/>
        </authorList>
    </citation>
    <scope>NUCLEOTIDE SEQUENCE [MRNA]</scope>
</reference>
<reference key="2">
    <citation type="journal article" date="1988" name="J. Biochem.">
        <title>Isolation and characterization of the chick 14K beta-galactoside-binding lectin gene.</title>
        <authorList>
            <person name="Ohyama Y."/>
            <person name="Kasai K."/>
        </authorList>
    </citation>
    <scope>NUCLEOTIDE SEQUENCE [GENOMIC DNA]</scope>
</reference>
<reference key="3">
    <citation type="journal article" date="1987" name="J. Biochem.">
        <title>Complete amino acid sequence of 14 kDa beta-galactoside-binding lectin of chick embryo.</title>
        <authorList>
            <person name="Hirabayashi J."/>
            <person name="Kawasaki H."/>
            <person name="Suzuki K."/>
            <person name="Kasai K."/>
        </authorList>
    </citation>
    <scope>PROTEIN SEQUENCE OF 2-135</scope>
    <scope>ACETYLATION AT SER-2</scope>
    <source>
        <tissue>Embryo</tissue>
    </source>
</reference>
<reference key="4">
    <citation type="journal article" date="2009" name="J. Mol. Biol.">
        <title>Homodimeric chicken galectin CG-1B (C-14): Crystal structure and detection of unique redox-dependent shape changes involving inter- and intrasubunit disulfide bridges by gel filtration, ultracentrifugation, site-directed mutagenesis, and peptide mass fingerprinting.</title>
        <authorList>
            <person name="Lopez-Lucendo M.F."/>
            <person name="Solis D."/>
            <person name="Saiz J.L."/>
            <person name="Kaltner H."/>
            <person name="Russwurm R."/>
            <person name="Andre S."/>
            <person name="Gabius H.J."/>
            <person name="Romero A."/>
        </authorList>
    </citation>
    <scope>X-RAY CRYSTALLOGRAPHY (2.1 ANGSTROMS)</scope>
    <scope>SUBUNIT</scope>
    <scope>MUTAGENESIS OF CYS-8</scope>
    <scope>DISULFIDE BOND</scope>
    <source>
        <strain>Bantam</strain>
    </source>
</reference>
<reference key="5">
    <citation type="journal article" date="2017" name="J. Biol. Chem.">
        <title>Chicken galectin-1B inhibits Newcastle disease virus adsorption and replication through binding to hemagglutinin-neuraminidase (HN) glycoprotein.</title>
        <authorList>
            <person name="Sun J."/>
            <person name="Han Z."/>
            <person name="Qi T."/>
            <person name="Zhao R."/>
            <person name="Liu S."/>
        </authorList>
    </citation>
    <scope>FUNCTION</scope>
    <scope>INTERACTION WITH NEWCASTLE DISEASE VIRUS PROTEIN HN (MICROBIAL INFECTION)</scope>
</reference>
<gene>
    <name type="primary">CG-1B</name>
</gene>
<proteinExistence type="evidence at protein level"/>
<sequence>MSCQGPVCTNLGLKPGQRLTVKGIIAPNAKSFVMNLGKDSTHLGLHFNPRFDAHGDVNLIVCNSKKMEEWGTEQRETVFPFQKGAPIEITFSINPSDLTVHLPGHQFSFPNRLGLSVFDYFDTHGDFTLRSVSWE</sequence>
<protein>
    <recommendedName>
        <fullName>Beta-galactoside-binding lectin</fullName>
    </recommendedName>
    <alternativeName>
        <fullName>14 kDa lectin</fullName>
    </alternativeName>
    <alternativeName>
        <fullName>C-14</fullName>
    </alternativeName>
    <alternativeName>
        <fullName>Galectin CG-1B</fullName>
    </alternativeName>
</protein>
<feature type="initiator methionine" description="Removed" evidence="6">
    <location>
        <position position="1"/>
    </location>
</feature>
<feature type="chain" id="PRO_0000076951" description="Beta-galactoside-binding lectin">
    <location>
        <begin position="2"/>
        <end position="135"/>
    </location>
</feature>
<feature type="domain" description="Galectin" evidence="3">
    <location>
        <begin position="5"/>
        <end position="135"/>
    </location>
</feature>
<feature type="binding site" evidence="1">
    <location>
        <begin position="46"/>
        <end position="50"/>
    </location>
    <ligand>
        <name>a beta-D-galactoside</name>
        <dbReference type="ChEBI" id="CHEBI:28034"/>
    </ligand>
</feature>
<feature type="binding site" evidence="1">
    <location>
        <position position="54"/>
    </location>
    <ligand>
        <name>a beta-D-galactoside</name>
        <dbReference type="ChEBI" id="CHEBI:28034"/>
    </ligand>
</feature>
<feature type="binding site" evidence="1">
    <location>
        <position position="63"/>
    </location>
    <ligand>
        <name>a beta-D-galactoside</name>
        <dbReference type="ChEBI" id="CHEBI:28034"/>
    </ligand>
</feature>
<feature type="binding site" evidence="2">
    <location>
        <begin position="70"/>
        <end position="76"/>
    </location>
    <ligand>
        <name>a beta-D-galactoside</name>
        <dbReference type="ChEBI" id="CHEBI:28034"/>
    </ligand>
</feature>
<feature type="binding site" evidence="1">
    <location>
        <begin position="70"/>
        <end position="73"/>
    </location>
    <ligand>
        <name>a beta-D-galactoside</name>
        <dbReference type="ChEBI" id="CHEBI:28034"/>
    </ligand>
</feature>
<feature type="modified residue" description="N-acetylserine" evidence="6">
    <location>
        <position position="2"/>
    </location>
</feature>
<feature type="disulfide bond" description="Redox-active" evidence="4">
    <location>
        <begin position="3"/>
        <end position="8"/>
    </location>
</feature>
<feature type="disulfide bond" description="Interchain; in linked form" evidence="4">
    <location>
        <position position="8"/>
    </location>
</feature>
<feature type="mutagenesis site" description="No redox-dependent shape changes." evidence="4">
    <original>C</original>
    <variation>V</variation>
    <location>
        <position position="8"/>
    </location>
</feature>
<feature type="strand" evidence="7">
    <location>
        <begin position="7"/>
        <end position="9"/>
    </location>
</feature>
<feature type="strand" evidence="7">
    <location>
        <begin position="18"/>
        <end position="25"/>
    </location>
</feature>
<feature type="strand" evidence="7">
    <location>
        <begin position="31"/>
        <end position="39"/>
    </location>
</feature>
<feature type="strand" evidence="7">
    <location>
        <begin position="42"/>
        <end position="53"/>
    </location>
</feature>
<feature type="strand" evidence="7">
    <location>
        <begin position="56"/>
        <end position="68"/>
    </location>
</feature>
<feature type="strand" evidence="7">
    <location>
        <begin position="74"/>
        <end position="76"/>
    </location>
</feature>
<feature type="strand" evidence="7">
    <location>
        <begin position="86"/>
        <end position="93"/>
    </location>
</feature>
<feature type="strand" evidence="7">
    <location>
        <begin position="95"/>
        <end position="102"/>
    </location>
</feature>
<feature type="strand" evidence="7">
    <location>
        <begin position="105"/>
        <end position="110"/>
    </location>
</feature>
<feature type="strand" evidence="7">
    <location>
        <begin position="120"/>
        <end position="135"/>
    </location>
</feature>
<organism>
    <name type="scientific">Gallus gallus</name>
    <name type="common">Chicken</name>
    <dbReference type="NCBI Taxonomy" id="9031"/>
    <lineage>
        <taxon>Eukaryota</taxon>
        <taxon>Metazoa</taxon>
        <taxon>Chordata</taxon>
        <taxon>Craniata</taxon>
        <taxon>Vertebrata</taxon>
        <taxon>Euteleostomi</taxon>
        <taxon>Archelosauria</taxon>
        <taxon>Archosauria</taxon>
        <taxon>Dinosauria</taxon>
        <taxon>Saurischia</taxon>
        <taxon>Theropoda</taxon>
        <taxon>Coelurosauria</taxon>
        <taxon>Aves</taxon>
        <taxon>Neognathae</taxon>
        <taxon>Galloanserae</taxon>
        <taxon>Galliformes</taxon>
        <taxon>Phasianidae</taxon>
        <taxon>Phasianinae</taxon>
        <taxon>Gallus</taxon>
    </lineage>
</organism>